<reference key="1">
    <citation type="journal article" date="1998" name="Biochim. Biophys. Acta">
        <title>Synthesis, antimicrobial activity and gene structure of a novel member of the dermaseptin B family.</title>
        <authorList>
            <person name="Fleury Y."/>
            <person name="Vouille V."/>
            <person name="Beven L."/>
            <person name="Amiche M."/>
            <person name="Wroblewski H."/>
            <person name="Delfour A."/>
            <person name="Nicolas P."/>
        </authorList>
    </citation>
    <scope>NUCLEOTIDE SEQUENCE [GENOMIC DNA]</scope>
    <scope>SYNTHESIS OF 46-75</scope>
    <source>
        <tissue>Blood</tissue>
    </source>
</reference>
<reference key="2">
    <citation type="journal article" date="2008" name="Peptides">
        <title>A consistent nomenclature of antimicrobial peptides isolated from frogs of the subfamily Phyllomedusinae.</title>
        <authorList>
            <person name="Amiche M."/>
            <person name="Ladram A."/>
            <person name="Nicolas P."/>
        </authorList>
    </citation>
    <scope>NOMENCLATURE</scope>
</reference>
<name>DRS9_PHYBI</name>
<protein>
    <recommendedName>
        <fullName evidence="2">Dermaseptin-B9</fullName>
        <shortName evidence="2">DRS-B9</shortName>
    </recommendedName>
    <alternativeName>
        <fullName evidence="2">Dermaseptin-gene related 3</fullName>
        <shortName evidence="3">Dermaseptin DRG3</shortName>
    </alternativeName>
</protein>
<proteinExistence type="evidence at transcript level"/>
<organism>
    <name type="scientific">Phyllomedusa bicolor</name>
    <name type="common">Two-colored leaf frog</name>
    <name type="synonym">Rana bicolor</name>
    <dbReference type="NCBI Taxonomy" id="8393"/>
    <lineage>
        <taxon>Eukaryota</taxon>
        <taxon>Metazoa</taxon>
        <taxon>Chordata</taxon>
        <taxon>Craniata</taxon>
        <taxon>Vertebrata</taxon>
        <taxon>Euteleostomi</taxon>
        <taxon>Amphibia</taxon>
        <taxon>Batrachia</taxon>
        <taxon>Anura</taxon>
        <taxon>Neobatrachia</taxon>
        <taxon>Hyloidea</taxon>
        <taxon>Hylidae</taxon>
        <taxon>Phyllomedusinae</taxon>
        <taxon>Phyllomedusa</taxon>
    </lineage>
</organism>
<feature type="signal peptide" evidence="1">
    <location>
        <begin position="1"/>
        <end position="22"/>
    </location>
</feature>
<feature type="propeptide" id="PRO_0000007109">
    <location>
        <begin position="23"/>
        <end position="43"/>
    </location>
</feature>
<feature type="peptide" id="PRO_0000007110" description="Dermaseptin-B9">
    <location>
        <begin position="46"/>
        <end position="75"/>
    </location>
</feature>
<feature type="propeptide" id="PRO_0000007111">
    <location>
        <begin position="76"/>
        <end position="77"/>
    </location>
</feature>
<gene>
    <name type="primary">DRG3</name>
</gene>
<evidence type="ECO:0000255" key="1"/>
<evidence type="ECO:0000303" key="2">
    <source>
    </source>
</evidence>
<evidence type="ECO:0000303" key="3">
    <source>
    </source>
</evidence>
<evidence type="ECO:0000305" key="4"/>
<dbReference type="EMBL" id="AJ312002">
    <property type="protein sequence ID" value="CAC37581.1"/>
    <property type="molecule type" value="Genomic_DNA"/>
</dbReference>
<dbReference type="GO" id="GO:0005576">
    <property type="term" value="C:extracellular region"/>
    <property type="evidence" value="ECO:0007669"/>
    <property type="project" value="UniProtKB-SubCell"/>
</dbReference>
<dbReference type="GO" id="GO:0042742">
    <property type="term" value="P:defense response to bacterium"/>
    <property type="evidence" value="ECO:0007669"/>
    <property type="project" value="UniProtKB-KW"/>
</dbReference>
<dbReference type="InterPro" id="IPR004275">
    <property type="entry name" value="Frog_antimicrobial_propeptide"/>
</dbReference>
<dbReference type="InterPro" id="IPR016322">
    <property type="entry name" value="FSAP"/>
</dbReference>
<dbReference type="Pfam" id="PF03032">
    <property type="entry name" value="FSAP_sig_propep"/>
    <property type="match status" value="1"/>
</dbReference>
<dbReference type="PIRSF" id="PIRSF001822">
    <property type="entry name" value="Dermaseptin_precursor"/>
    <property type="match status" value="1"/>
</dbReference>
<sequence length="77" mass="8701">MAFLKKSLFLVLFLGLVSLSVCEEEKRENEDEEEQEDDEQSEEKRALWKTIIKGAGKMIGSLAKNLLGSQAQPESEQ</sequence>
<accession>P81488</accession>
<accession>Q90ZK4</accession>
<comment type="function">
    <text>Has antimicrobial activity. Exhibits a bactericidal activity towards several species of mollicutes, firmicutes and gracilicutes. This peptide is membranotropic and it efficiently depolarizes the plasma membrane.</text>
</comment>
<comment type="subcellular location">
    <subcellularLocation>
        <location>Secreted</location>
    </subcellularLocation>
</comment>
<comment type="tissue specificity">
    <text>Expressed by the skin glands.</text>
</comment>
<comment type="similarity">
    <text evidence="4">Belongs to the frog skin active peptide (FSAP) family. Dermaseptin subfamily.</text>
</comment>
<comment type="online information" name="The antimicrobial peptide database">
    <link uri="https://wangapd3.com/database/query_output.php?ID=0164"/>
</comment>
<keyword id="KW-0878">Amphibian defense peptide</keyword>
<keyword id="KW-0044">Antibiotic</keyword>
<keyword id="KW-0929">Antimicrobial</keyword>
<keyword id="KW-0165">Cleavage on pair of basic residues</keyword>
<keyword id="KW-0964">Secreted</keyword>
<keyword id="KW-0732">Signal</keyword>